<gene>
    <name evidence="1" type="primary">nadK</name>
    <name type="ordered locus">LJ_0824</name>
</gene>
<dbReference type="EC" id="2.7.1.23" evidence="1"/>
<dbReference type="EMBL" id="AE017198">
    <property type="protein sequence ID" value="AAS08645.1"/>
    <property type="molecule type" value="Genomic_DNA"/>
</dbReference>
<dbReference type="RefSeq" id="WP_004897744.1">
    <property type="nucleotide sequence ID" value="NC_005362.1"/>
</dbReference>
<dbReference type="SMR" id="Q74KC7"/>
<dbReference type="KEGG" id="ljo:LJ_0824"/>
<dbReference type="eggNOG" id="COG0061">
    <property type="taxonomic scope" value="Bacteria"/>
</dbReference>
<dbReference type="HOGENOM" id="CLU_008831_0_3_9"/>
<dbReference type="Proteomes" id="UP000000581">
    <property type="component" value="Chromosome"/>
</dbReference>
<dbReference type="GO" id="GO:0005737">
    <property type="term" value="C:cytoplasm"/>
    <property type="evidence" value="ECO:0007669"/>
    <property type="project" value="UniProtKB-SubCell"/>
</dbReference>
<dbReference type="GO" id="GO:0005524">
    <property type="term" value="F:ATP binding"/>
    <property type="evidence" value="ECO:0007669"/>
    <property type="project" value="UniProtKB-KW"/>
</dbReference>
<dbReference type="GO" id="GO:0046872">
    <property type="term" value="F:metal ion binding"/>
    <property type="evidence" value="ECO:0007669"/>
    <property type="project" value="UniProtKB-UniRule"/>
</dbReference>
<dbReference type="GO" id="GO:0051287">
    <property type="term" value="F:NAD binding"/>
    <property type="evidence" value="ECO:0007669"/>
    <property type="project" value="UniProtKB-ARBA"/>
</dbReference>
<dbReference type="GO" id="GO:0003951">
    <property type="term" value="F:NAD+ kinase activity"/>
    <property type="evidence" value="ECO:0007669"/>
    <property type="project" value="UniProtKB-UniRule"/>
</dbReference>
<dbReference type="GO" id="GO:0019674">
    <property type="term" value="P:NAD metabolic process"/>
    <property type="evidence" value="ECO:0007669"/>
    <property type="project" value="InterPro"/>
</dbReference>
<dbReference type="GO" id="GO:0006741">
    <property type="term" value="P:NADP biosynthetic process"/>
    <property type="evidence" value="ECO:0007669"/>
    <property type="project" value="UniProtKB-UniRule"/>
</dbReference>
<dbReference type="Gene3D" id="3.40.50.10330">
    <property type="entry name" value="Probable inorganic polyphosphate/atp-NAD kinase, domain 1"/>
    <property type="match status" value="1"/>
</dbReference>
<dbReference type="Gene3D" id="2.60.200.30">
    <property type="entry name" value="Probable inorganic polyphosphate/atp-NAD kinase, domain 2"/>
    <property type="match status" value="1"/>
</dbReference>
<dbReference type="HAMAP" id="MF_00361">
    <property type="entry name" value="NAD_kinase"/>
    <property type="match status" value="1"/>
</dbReference>
<dbReference type="InterPro" id="IPR017438">
    <property type="entry name" value="ATP-NAD_kinase_N"/>
</dbReference>
<dbReference type="InterPro" id="IPR017437">
    <property type="entry name" value="ATP-NAD_kinase_PpnK-typ_C"/>
</dbReference>
<dbReference type="InterPro" id="IPR016064">
    <property type="entry name" value="NAD/diacylglycerol_kinase_sf"/>
</dbReference>
<dbReference type="InterPro" id="IPR002504">
    <property type="entry name" value="NADK"/>
</dbReference>
<dbReference type="NCBIfam" id="NF003424">
    <property type="entry name" value="PRK04885.1"/>
    <property type="match status" value="1"/>
</dbReference>
<dbReference type="PANTHER" id="PTHR20275">
    <property type="entry name" value="NAD KINASE"/>
    <property type="match status" value="1"/>
</dbReference>
<dbReference type="PANTHER" id="PTHR20275:SF0">
    <property type="entry name" value="NAD KINASE"/>
    <property type="match status" value="1"/>
</dbReference>
<dbReference type="Pfam" id="PF01513">
    <property type="entry name" value="NAD_kinase"/>
    <property type="match status" value="1"/>
</dbReference>
<dbReference type="Pfam" id="PF20143">
    <property type="entry name" value="NAD_kinase_C"/>
    <property type="match status" value="1"/>
</dbReference>
<dbReference type="SUPFAM" id="SSF111331">
    <property type="entry name" value="NAD kinase/diacylglycerol kinase-like"/>
    <property type="match status" value="1"/>
</dbReference>
<comment type="function">
    <text evidence="1">Involved in the regulation of the intracellular balance of NAD and NADP, and is a key enzyme in the biosynthesis of NADP. Catalyzes specifically the phosphorylation on 2'-hydroxyl of the adenosine moiety of NAD to yield NADP.</text>
</comment>
<comment type="catalytic activity">
    <reaction evidence="1">
        <text>NAD(+) + ATP = ADP + NADP(+) + H(+)</text>
        <dbReference type="Rhea" id="RHEA:18629"/>
        <dbReference type="ChEBI" id="CHEBI:15378"/>
        <dbReference type="ChEBI" id="CHEBI:30616"/>
        <dbReference type="ChEBI" id="CHEBI:57540"/>
        <dbReference type="ChEBI" id="CHEBI:58349"/>
        <dbReference type="ChEBI" id="CHEBI:456216"/>
        <dbReference type="EC" id="2.7.1.23"/>
    </reaction>
</comment>
<comment type="cofactor">
    <cofactor evidence="1">
        <name>a divalent metal cation</name>
        <dbReference type="ChEBI" id="CHEBI:60240"/>
    </cofactor>
</comment>
<comment type="subcellular location">
    <subcellularLocation>
        <location evidence="1">Cytoplasm</location>
    </subcellularLocation>
</comment>
<comment type="similarity">
    <text evidence="1">Belongs to the NAD kinase family.</text>
</comment>
<reference key="1">
    <citation type="journal article" date="2004" name="Proc. Natl. Acad. Sci. U.S.A.">
        <title>The genome sequence of the probiotic intestinal bacterium Lactobacillus johnsonii NCC 533.</title>
        <authorList>
            <person name="Pridmore R.D."/>
            <person name="Berger B."/>
            <person name="Desiere F."/>
            <person name="Vilanova D."/>
            <person name="Barretto C."/>
            <person name="Pittet A.-C."/>
            <person name="Zwahlen M.-C."/>
            <person name="Rouvet M."/>
            <person name="Altermann E."/>
            <person name="Barrangou R."/>
            <person name="Mollet B."/>
            <person name="Mercenier A."/>
            <person name="Klaenhammer T."/>
            <person name="Arigoni F."/>
            <person name="Schell M.A."/>
        </authorList>
    </citation>
    <scope>NUCLEOTIDE SEQUENCE [LARGE SCALE GENOMIC DNA]</scope>
    <source>
        <strain>CNCM I-1225 / La1 / NCC 533</strain>
    </source>
</reference>
<name>NADK_LACJO</name>
<sequence length="270" mass="30637">MKVALVYNDKVETLAVVKALEKLLNARKIEIDPENPDVVITIGGDGTLISGFHKYQNLVDKIRFIGVHTGHLGFYTDWRNFEINKMVDNLTKKQPSSASYPLLELIITTGAGEKKKLLALNEATIKRVSKTLKADVYIRDQFFESFKGDGLCVSTPTGSTAYSKSLGGAVIHPRLKALQMTEIASINNRVFRTLSSPIVIAPDEWITIKPETGSDDHYVVTFDGYEFNHKHIKKIEYRISQHVIRFDKYQHTHFWNRVEDAFIGQPKDKQ</sequence>
<proteinExistence type="inferred from homology"/>
<feature type="chain" id="PRO_0000229647" description="NAD kinase">
    <location>
        <begin position="1"/>
        <end position="270"/>
    </location>
</feature>
<feature type="active site" description="Proton acceptor" evidence="1">
    <location>
        <position position="45"/>
    </location>
</feature>
<feature type="binding site" evidence="1">
    <location>
        <begin position="45"/>
        <end position="46"/>
    </location>
    <ligand>
        <name>NAD(+)</name>
        <dbReference type="ChEBI" id="CHEBI:57540"/>
    </ligand>
</feature>
<feature type="binding site" evidence="1">
    <location>
        <begin position="121"/>
        <end position="122"/>
    </location>
    <ligand>
        <name>NAD(+)</name>
        <dbReference type="ChEBI" id="CHEBI:57540"/>
    </ligand>
</feature>
<feature type="binding site" evidence="1">
    <location>
        <position position="147"/>
    </location>
    <ligand>
        <name>NAD(+)</name>
        <dbReference type="ChEBI" id="CHEBI:57540"/>
    </ligand>
</feature>
<feature type="binding site" evidence="1">
    <location>
        <position position="149"/>
    </location>
    <ligand>
        <name>NAD(+)</name>
        <dbReference type="ChEBI" id="CHEBI:57540"/>
    </ligand>
</feature>
<feature type="binding site" evidence="1">
    <location>
        <begin position="160"/>
        <end position="165"/>
    </location>
    <ligand>
        <name>NAD(+)</name>
        <dbReference type="ChEBI" id="CHEBI:57540"/>
    </ligand>
</feature>
<feature type="binding site" evidence="1">
    <location>
        <position position="184"/>
    </location>
    <ligand>
        <name>NAD(+)</name>
        <dbReference type="ChEBI" id="CHEBI:57540"/>
    </ligand>
</feature>
<evidence type="ECO:0000255" key="1">
    <source>
        <dbReference type="HAMAP-Rule" id="MF_00361"/>
    </source>
</evidence>
<keyword id="KW-0067">ATP-binding</keyword>
<keyword id="KW-0963">Cytoplasm</keyword>
<keyword id="KW-0418">Kinase</keyword>
<keyword id="KW-0520">NAD</keyword>
<keyword id="KW-0521">NADP</keyword>
<keyword id="KW-0547">Nucleotide-binding</keyword>
<keyword id="KW-0808">Transferase</keyword>
<organism>
    <name type="scientific">Lactobacillus johnsonii (strain CNCM I-12250 / La1 / NCC 533)</name>
    <dbReference type="NCBI Taxonomy" id="257314"/>
    <lineage>
        <taxon>Bacteria</taxon>
        <taxon>Bacillati</taxon>
        <taxon>Bacillota</taxon>
        <taxon>Bacilli</taxon>
        <taxon>Lactobacillales</taxon>
        <taxon>Lactobacillaceae</taxon>
        <taxon>Lactobacillus</taxon>
    </lineage>
</organism>
<accession>Q74KC7</accession>
<protein>
    <recommendedName>
        <fullName evidence="1">NAD kinase</fullName>
        <ecNumber evidence="1">2.7.1.23</ecNumber>
    </recommendedName>
    <alternativeName>
        <fullName evidence="1">ATP-dependent NAD kinase</fullName>
    </alternativeName>
</protein>